<accession>Q5A0E5</accession>
<accession>A0A1D8PRJ2</accession>
<accession>Q3MNT7</accession>
<feature type="chain" id="PRO_0000424609" description="Transcriptional regulator NRG1">
    <location>
        <begin position="1"/>
        <end position="310"/>
    </location>
</feature>
<feature type="zinc finger region" description="C2H2-type 1" evidence="1">
    <location>
        <begin position="228"/>
        <end position="250"/>
    </location>
</feature>
<feature type="zinc finger region" description="C2H2-type 2" evidence="1">
    <location>
        <begin position="256"/>
        <end position="280"/>
    </location>
</feature>
<feature type="region of interest" description="Disordered" evidence="2">
    <location>
        <begin position="85"/>
        <end position="131"/>
    </location>
</feature>
<feature type="compositionally biased region" description="Low complexity" evidence="2">
    <location>
        <begin position="104"/>
        <end position="131"/>
    </location>
</feature>
<organism>
    <name type="scientific">Candida albicans (strain SC5314 / ATCC MYA-2876)</name>
    <name type="common">Yeast</name>
    <dbReference type="NCBI Taxonomy" id="237561"/>
    <lineage>
        <taxon>Eukaryota</taxon>
        <taxon>Fungi</taxon>
        <taxon>Dikarya</taxon>
        <taxon>Ascomycota</taxon>
        <taxon>Saccharomycotina</taxon>
        <taxon>Pichiomycetes</taxon>
        <taxon>Debaryomycetaceae</taxon>
        <taxon>Candida/Lodderomyces clade</taxon>
        <taxon>Candida</taxon>
    </lineage>
</organism>
<protein>
    <recommendedName>
        <fullName>Transcriptional regulator NRG1</fullName>
    </recommendedName>
</protein>
<evidence type="ECO:0000255" key="1">
    <source>
        <dbReference type="PROSITE-ProRule" id="PRU00042"/>
    </source>
</evidence>
<evidence type="ECO:0000256" key="2">
    <source>
        <dbReference type="SAM" id="MobiDB-lite"/>
    </source>
</evidence>
<evidence type="ECO:0000269" key="3">
    <source>
    </source>
</evidence>
<evidence type="ECO:0000269" key="4">
    <source>
    </source>
</evidence>
<evidence type="ECO:0000269" key="5">
    <source>
    </source>
</evidence>
<evidence type="ECO:0000269" key="6">
    <source>
    </source>
</evidence>
<evidence type="ECO:0000269" key="7">
    <source>
    </source>
</evidence>
<evidence type="ECO:0000269" key="8">
    <source>
    </source>
</evidence>
<evidence type="ECO:0000269" key="9">
    <source>
    </source>
</evidence>
<evidence type="ECO:0000269" key="10">
    <source>
    </source>
</evidence>
<evidence type="ECO:0000269" key="11">
    <source>
    </source>
</evidence>
<evidence type="ECO:0000269" key="12">
    <source>
    </source>
</evidence>
<evidence type="ECO:0000269" key="13">
    <source>
    </source>
</evidence>
<evidence type="ECO:0000269" key="14">
    <source>
    </source>
</evidence>
<evidence type="ECO:0000269" key="15">
    <source>
    </source>
</evidence>
<evidence type="ECO:0000269" key="16">
    <source>
    </source>
</evidence>
<evidence type="ECO:0000269" key="17">
    <source>
    </source>
</evidence>
<evidence type="ECO:0000269" key="18">
    <source>
    </source>
</evidence>
<evidence type="ECO:0000269" key="19">
    <source>
    </source>
</evidence>
<evidence type="ECO:0000269" key="20">
    <source>
    </source>
</evidence>
<evidence type="ECO:0000269" key="21">
    <source>
    </source>
</evidence>
<evidence type="ECO:0000269" key="22">
    <source>
    </source>
</evidence>
<evidence type="ECO:0000269" key="23">
    <source>
    </source>
</evidence>
<evidence type="ECO:0000269" key="24">
    <source>
    </source>
</evidence>
<evidence type="ECO:0000305" key="25"/>
<gene>
    <name type="primary">NRG1</name>
    <name type="ordered locus">CAALFM_C704230WA</name>
    <name type="ORF">CaO19.7150</name>
</gene>
<comment type="function">
    <text evidence="3 4 5 7 8 9 12 13 14 16 17 19 20 21 22 23">Transcriptional repressor that binds NRG1 response elements (NRE) of target promoters. Involved in regulation of chlamydospore formation, hyphal growth, virulence, and stress response. Plays a key role in regulating true hyphal growth, but does not regulate pseudohyphal growth in the same fashion. Directs transcriptional repression of a subset of filament-specific genes such as HWP1, HYR1, ALS8, HWP1, or ECE1; via the TUP1 pathway. Functions with UME6 in a negative feedback loop to control the level and duration of filament-specific gene expression in response to inducing conditions. Plays a key role in biofilm formation and dispersion. Also plays the role of a negative regulator of virulence in mice models. Required for the expression of the cell wall genes RBR1.</text>
</comment>
<comment type="subcellular location">
    <subcellularLocation>
        <location evidence="25">Nucleus</location>
    </subcellularLocation>
</comment>
<comment type="induction">
    <text evidence="4 6 9 10 11 15 18 24">Down-regulated during filament induction and in response to serum at 37 degrees Celsius. Expression of NRG1 is also repressed by RIM101 and under conditions that repress CDC28 expression. The bacterial signaling molecules indole and its derivate indole-3-acetonitrile (IAN) increase NRG1 expression.</text>
</comment>
<comment type="disruption phenotype">
    <text evidence="4">Exhibits a high degree of filamentous growth and leads to avirulence in a mouse model.</text>
</comment>
<reference key="1">
    <citation type="journal article" date="2004" name="Proc. Natl. Acad. Sci. U.S.A.">
        <title>The diploid genome sequence of Candida albicans.</title>
        <authorList>
            <person name="Jones T."/>
            <person name="Federspiel N.A."/>
            <person name="Chibana H."/>
            <person name="Dungan J."/>
            <person name="Kalman S."/>
            <person name="Magee B.B."/>
            <person name="Newport G."/>
            <person name="Thorstenson Y.R."/>
            <person name="Agabian N."/>
            <person name="Magee P.T."/>
            <person name="Davis R.W."/>
            <person name="Scherer S."/>
        </authorList>
    </citation>
    <scope>NUCLEOTIDE SEQUENCE [LARGE SCALE GENOMIC DNA]</scope>
    <source>
        <strain>SC5314 / ATCC MYA-2876</strain>
    </source>
</reference>
<reference key="2">
    <citation type="journal article" date="2007" name="Genome Biol.">
        <title>Assembly of the Candida albicans genome into sixteen supercontigs aligned on the eight chromosomes.</title>
        <authorList>
            <person name="van het Hoog M."/>
            <person name="Rast T.J."/>
            <person name="Martchenko M."/>
            <person name="Grindle S."/>
            <person name="Dignard D."/>
            <person name="Hogues H."/>
            <person name="Cuomo C."/>
            <person name="Berriman M."/>
            <person name="Scherer S."/>
            <person name="Magee B.B."/>
            <person name="Whiteway M."/>
            <person name="Chibana H."/>
            <person name="Nantel A."/>
            <person name="Magee P.T."/>
        </authorList>
    </citation>
    <scope>GENOME REANNOTATION</scope>
    <source>
        <strain>SC5314 / ATCC MYA-2876</strain>
    </source>
</reference>
<reference key="3">
    <citation type="journal article" date="2013" name="Genome Biol.">
        <title>Assembly of a phased diploid Candida albicans genome facilitates allele-specific measurements and provides a simple model for repeat and indel structure.</title>
        <authorList>
            <person name="Muzzey D."/>
            <person name="Schwartz K."/>
            <person name="Weissman J.S."/>
            <person name="Sherlock G."/>
        </authorList>
    </citation>
    <scope>NUCLEOTIDE SEQUENCE [LARGE SCALE GENOMIC DNA]</scope>
    <scope>GENOME REANNOTATION</scope>
    <source>
        <strain>SC5314 / ATCC MYA-2876</strain>
    </source>
</reference>
<reference key="4">
    <citation type="journal article" date="2001" name="EMBO J.">
        <title>NRG1 represses yeast-hypha morphogenesis and hypha-specific gene expression in Candida albicans.</title>
        <authorList>
            <person name="Murad A.M."/>
            <person name="Leng P."/>
            <person name="Straffon M."/>
            <person name="Wishart J."/>
            <person name="Macaskill S."/>
            <person name="MacCallum D."/>
            <person name="Schnell N."/>
            <person name="Talibi D."/>
            <person name="Marechal D."/>
            <person name="Tekaia F."/>
            <person name="d'Enfert C."/>
            <person name="Gaillardin C."/>
            <person name="Odds F.C."/>
            <person name="Brown A.J."/>
        </authorList>
    </citation>
    <scope>FUNCTION</scope>
</reference>
<reference key="5">
    <citation type="journal article" date="2001" name="EMBO J.">
        <title>NRG1, a repressor of filamentous growth in C.albicans, is down-regulated during filament induction.</title>
        <authorList>
            <person name="Braun B.R."/>
            <person name="Kadosh D."/>
            <person name="Johnson A.D."/>
        </authorList>
    </citation>
    <scope>FUNCTION</scope>
    <scope>DISRUPTION PHENOTYPE</scope>
    <scope>INDUCTION</scope>
</reference>
<reference key="6">
    <citation type="journal article" date="2001" name="Mol. Microbiol.">
        <title>Transcript profiling in Candida albicans reveals new cellular functions for the transcriptional repressors CaTup1, CaMig1 and CaNrg1.</title>
        <authorList>
            <person name="Murad A.M."/>
            <person name="d'Enfert C."/>
            <person name="Gaillardin C."/>
            <person name="Tournu H."/>
            <person name="Tekaia F."/>
            <person name="Talibi D."/>
            <person name="Marechal D."/>
            <person name="Marchais V."/>
            <person name="Cottin J."/>
            <person name="Brown A.J."/>
        </authorList>
    </citation>
    <scope>FUNCTION</scope>
</reference>
<reference key="7">
    <citation type="journal article" date="2002" name="Mol. Biol. Cell">
        <title>Transcription profiling of Candida albicans cells undergoing the yeast-to-hyphal transition.</title>
        <authorList>
            <person name="Nantel A."/>
            <person name="Dignard D."/>
            <person name="Bachewich C."/>
            <person name="Harcus D."/>
            <person name="Marcil A."/>
            <person name="Bouin A.P."/>
            <person name="Sensen C.W."/>
            <person name="Hogues H."/>
            <person name="van het Hoog M."/>
            <person name="Gordon P."/>
            <person name="Rigby T."/>
            <person name="Benoit F."/>
            <person name="Tessier D.C."/>
            <person name="Thomas D.Y."/>
            <person name="Whiteway M."/>
        </authorList>
    </citation>
    <scope>INDUCTION</scope>
</reference>
<reference key="8">
    <citation type="journal article" date="2003" name="Eukaryot. Cell">
        <title>Engineered control of cell morphology in vivo reveals distinct roles for yeast and filamentous forms of Candida albicans during infection.</title>
        <authorList>
            <person name="Saville S.P."/>
            <person name="Lazzell A.L."/>
            <person name="Monteagudo C."/>
            <person name="Lopez-Ribot J.L."/>
        </authorList>
    </citation>
    <scope>FUNCTION</scope>
</reference>
<reference key="9">
    <citation type="journal article" date="2003" name="Mol. Microbiol.">
        <title>CaSPA2 is important for polarity establishment and maintenance in Candida albicans.</title>
        <authorList>
            <person name="Zheng X.D."/>
            <person name="Wang Y.M."/>
            <person name="Wang Y."/>
        </authorList>
    </citation>
    <scope>FUNCTION</scope>
</reference>
<reference key="10">
    <citation type="journal article" date="2004" name="Eukaryot. Cell">
        <title>RBR1, a novel pH-regulated cell wall gene of Candida albicans, is repressed by RIM101 and activated by NRG1.</title>
        <authorList>
            <person name="Lotz H."/>
            <person name="Sohn K."/>
            <person name="Brunner H."/>
            <person name="Muhlschlegel F.A."/>
            <person name="Rupp S."/>
        </authorList>
    </citation>
    <scope>FUNCTION</scope>
    <scope>INDUCTION</scope>
</reference>
<reference key="11">
    <citation type="journal article" date="2004" name="FEMS Yeast Res.">
        <title>Transcriptional profiling of the early stages of germination in Candida albicans by real-time RT-PCR.</title>
        <authorList>
            <person name="Toyoda M."/>
            <person name="Cho T."/>
            <person name="Kaminishi H."/>
            <person name="Sudoh M."/>
            <person name="Chibana H."/>
        </authorList>
    </citation>
    <scope>INDUCTION</scope>
</reference>
<reference key="12">
    <citation type="journal article" date="2004" name="Mol. Microbiol.">
        <title>Transcriptional profiling in Candida albicans reveals new adaptive responses to extracellular pH and functions for Rim101p.</title>
        <authorList>
            <person name="Bensen E.S."/>
            <person name="Martin S.J."/>
            <person name="Li M."/>
            <person name="Berman J."/>
            <person name="Davis D.A."/>
        </authorList>
    </citation>
    <scope>INDUCTION</scope>
</reference>
<reference key="13">
    <citation type="journal article" date="2005" name="Fungal Genet. Biol.">
        <title>Expression of one-hybrid fusions with Staphylococcus aureus lexA in Candida albicans confirms that Nrg1 is a transcriptional repressor and that Gcn4 is a transcriptional activator.</title>
        <authorList>
            <person name="Russell C.L."/>
            <person name="Brown A.J."/>
        </authorList>
    </citation>
    <scope>FUNCTION</scope>
</reference>
<reference key="14">
    <citation type="journal article" date="2005" name="Mol. Microbiol.">
        <title>Differential expression of the NRG1 repressor controls species-specific regulation of chlamydospore development in Candida albicans and Candida dubliniensis.</title>
        <authorList>
            <person name="Staib P."/>
            <person name="Morschhauser J."/>
        </authorList>
    </citation>
    <scope>FUNCTION</scope>
</reference>
<reference key="15">
    <citation type="journal article" date="2006" name="Yeast">
        <title>Repression of CDC28 reduces the expression of the morphology-related transcription factors, Efg1p, Nrg1p, Rbf1p, Rim101p, Fkh2p and Tec1p and induces cell elongation in Candida albicans.</title>
        <authorList>
            <person name="Umeyama T."/>
            <person name="Kaneko A."/>
            <person name="Niimi M."/>
            <person name="Uehara Y."/>
        </authorList>
    </citation>
    <scope>INDUCTION</scope>
</reference>
<reference key="16">
    <citation type="journal article" date="2006" name="Antimicrob. Agents Chemother.">
        <title>Inhibition of filamentation can be used to treat disseminated candidiasis.</title>
        <authorList>
            <person name="Saville S.P."/>
            <person name="Lazzell A.L."/>
            <person name="Bryant A.P."/>
            <person name="Fretzen A."/>
            <person name="Monreal A."/>
            <person name="Solberg E.O."/>
            <person name="Monteagudo C."/>
            <person name="Lopez-Ribot J.L."/>
            <person name="Milne G.T."/>
        </authorList>
    </citation>
    <scope>FUNCTION</scope>
</reference>
<reference key="17">
    <citation type="journal article" date="2006" name="J. Infect. Dis.">
        <title>Drosophila melanogaster as a facile model for large-scale studies of virulence mechanisms and antifungal drug efficacy in Candida species.</title>
        <authorList>
            <person name="Chamilos G."/>
            <person name="Lionakis M.S."/>
            <person name="Lewis R.E."/>
            <person name="Lopez-Ribot J.L."/>
            <person name="Saville S.P."/>
            <person name="Albert N.D."/>
            <person name="Halder G."/>
            <person name="Kontoyiannis D.P."/>
        </authorList>
    </citation>
    <scope>FUNCTION</scope>
</reference>
<reference key="18">
    <citation type="journal article" date="2008" name="Cell. Microbiol.">
        <title>Candida albicans transcription factor Rim101 mediates pathogenic interactions through cell wall functions.</title>
        <authorList>
            <person name="Nobile C.J."/>
            <person name="Solis N."/>
            <person name="Myers C.L."/>
            <person name="Fay A.J."/>
            <person name="Deneault J.S."/>
            <person name="Nantel A."/>
            <person name="Mitchell A.P."/>
            <person name="Filler S.G."/>
        </authorList>
    </citation>
    <scope>FUNCTION</scope>
</reference>
<reference key="19">
    <citation type="journal article" date="2008" name="Infect. Immun.">
        <title>Use of a genetically engineered strain to evaluate the pathogenic potential of yeast cell and filamentous forms during Candida albicans systemic infection in immunodeficient mice.</title>
        <authorList>
            <person name="Saville S.P."/>
            <person name="Lazzell A.L."/>
            <person name="Chaturvedi A.K."/>
            <person name="Monteagudo C."/>
            <person name="Lopez-Ribot J.L."/>
        </authorList>
    </citation>
    <scope>FUNCTION</scope>
</reference>
<reference key="20">
    <citation type="journal article" date="2008" name="Mol. Biol. Cell">
        <title>UME6, a novel filament-specific regulator of Candida albicans hyphal extension and virulence.</title>
        <authorList>
            <person name="Banerjee M."/>
            <person name="Thompson D.S."/>
            <person name="Lazzell A."/>
            <person name="Carlisle P.L."/>
            <person name="Pierce C."/>
            <person name="Monteagudo C."/>
            <person name="Lopez-Ribot J.L."/>
            <person name="Kadosh D."/>
        </authorList>
    </citation>
    <scope>INDUCTION</scope>
</reference>
<reference key="21">
    <citation type="journal article" date="2008" name="Mol. Biol. Cell">
        <title>MNL1 regulates weak acid-induced stress responses of the fungal pathogen Candida albicans.</title>
        <authorList>
            <person name="Ramsdale M."/>
            <person name="Selway L."/>
            <person name="Stead D."/>
            <person name="Walker J."/>
            <person name="Yin Z."/>
            <person name="Nicholls S.M."/>
            <person name="Crowe J."/>
            <person name="Sheils E.M."/>
            <person name="Brown A.J."/>
        </authorList>
    </citation>
    <scope>FUNCTION</scope>
</reference>
<reference key="22">
    <citation type="journal article" date="2009" name="Clin. Vaccine Immunol.">
        <title>Efficacy of a genetically engineered Candida albicans tet-NRG1 strain as an experimental live attenuated vaccine against hematogenously disseminated candidiasis.</title>
        <authorList>
            <person name="Saville S.P."/>
            <person name="Lazzell A.L."/>
            <person name="Chaturvedi A.K."/>
            <person name="Monteagudo C."/>
            <person name="Lopez-Ribot J.L."/>
        </authorList>
    </citation>
    <scope>FUNCTION</scope>
</reference>
<reference key="23">
    <citation type="journal article" date="2010" name="Eukaryot. Cell">
        <title>The transcriptional regulator Nrg1p controls Candida albicans biofilm formation and dispersion.</title>
        <authorList>
            <person name="Uppuluri P."/>
            <person name="Pierce C.G."/>
            <person name="Thomas D.P."/>
            <person name="Bubeck S.S."/>
            <person name="Saville S.P."/>
            <person name="Lopez-Ribot J.L."/>
        </authorList>
    </citation>
    <scope>FUNCTION</scope>
</reference>
<reference key="24">
    <citation type="journal article" date="2010" name="Mycopathologia">
        <title>An analysis of the impact of NRG1 overexpression on the Candida albicans response to specific environmental stimuli.</title>
        <authorList>
            <person name="Cleary I.A."/>
            <person name="Saville S.P."/>
        </authorList>
    </citation>
    <scope>FUNCTION</scope>
</reference>
<reference key="25">
    <citation type="journal article" date="2012" name="J. Appl. Microbiol.">
        <title>The bacterial signalling molecule indole attenuates the virulence of the fungal pathogen Candida albicans.</title>
        <authorList>
            <person name="Oh S."/>
            <person name="Go G.W."/>
            <person name="Mylonakis E."/>
            <person name="Kim Y."/>
        </authorList>
    </citation>
    <scope>INDUCTION</scope>
</reference>
<keyword id="KW-0479">Metal-binding</keyword>
<keyword id="KW-0539">Nucleus</keyword>
<keyword id="KW-1185">Reference proteome</keyword>
<keyword id="KW-0677">Repeat</keyword>
<keyword id="KW-0678">Repressor</keyword>
<keyword id="KW-0346">Stress response</keyword>
<keyword id="KW-0843">Virulence</keyword>
<keyword id="KW-0862">Zinc</keyword>
<keyword id="KW-0863">Zinc-finger</keyword>
<proteinExistence type="evidence at transcript level"/>
<name>NRG1_CANAL</name>
<sequence>MLYQQSYPITNKLLNASAAGSTSTASIIDGGCTLSKPGSGKTKSTTSLPSFNELLTSIPLPNEFKPSTKNTNQAAAATATSPYNYYMGPPAQHRLPTPPPYPMSSPTTATAATPLSQQSPHLQPQQTLQQPQPYHQQYYNYQYAAPPYPHPSQVPPPASYQQRHQQPMYQNTNGVPIIIRPSPGLITPTSTTFDHAKIRSNSTGDLSANSLALSSNNNTQSKDPRRKHVCKVCSRSFTTSGHLARHNRIHTGERKHQCPWPTCEARFARQDNCNQHYKTHTNGKNKRNRQQHRTLEASHVGTKYNTKSLV</sequence>
<dbReference type="EMBL" id="CP017629">
    <property type="protein sequence ID" value="AOW30760.1"/>
    <property type="molecule type" value="Genomic_DNA"/>
</dbReference>
<dbReference type="RefSeq" id="XP_715199.1">
    <property type="nucleotide sequence ID" value="XM_710106.1"/>
</dbReference>
<dbReference type="SMR" id="Q5A0E5"/>
<dbReference type="BioGRID" id="1226260">
    <property type="interactions" value="1"/>
</dbReference>
<dbReference type="STRING" id="237561.Q5A0E5"/>
<dbReference type="EnsemblFungi" id="C7_04230W_A-T">
    <property type="protein sequence ID" value="C7_04230W_A-T-p1"/>
    <property type="gene ID" value="C7_04230W_A"/>
</dbReference>
<dbReference type="GeneID" id="3643166"/>
<dbReference type="KEGG" id="cal:CAALFM_C704230WA"/>
<dbReference type="CGD" id="CAL0000186831">
    <property type="gene designation" value="NRG1"/>
</dbReference>
<dbReference type="VEuPathDB" id="FungiDB:C7_04230W_A"/>
<dbReference type="eggNOG" id="KOG1721">
    <property type="taxonomic scope" value="Eukaryota"/>
</dbReference>
<dbReference type="HOGENOM" id="CLU_069169_0_0_1"/>
<dbReference type="InParanoid" id="Q5A0E5"/>
<dbReference type="OMA" id="SHKEAHH"/>
<dbReference type="OrthoDB" id="6365676at2759"/>
<dbReference type="PHI-base" id="PHI:10234"/>
<dbReference type="Proteomes" id="UP000000559">
    <property type="component" value="Chromosome 7"/>
</dbReference>
<dbReference type="GO" id="GO:0000785">
    <property type="term" value="C:chromatin"/>
    <property type="evidence" value="ECO:0000318"/>
    <property type="project" value="GO_Central"/>
</dbReference>
<dbReference type="GO" id="GO:0005634">
    <property type="term" value="C:nucleus"/>
    <property type="evidence" value="ECO:0007669"/>
    <property type="project" value="UniProtKB-SubCell"/>
</dbReference>
<dbReference type="GO" id="GO:0005667">
    <property type="term" value="C:transcription regulator complex"/>
    <property type="evidence" value="ECO:0000318"/>
    <property type="project" value="GO_Central"/>
</dbReference>
<dbReference type="GO" id="GO:0003700">
    <property type="term" value="F:DNA-binding transcription factor activity"/>
    <property type="evidence" value="ECO:0000314"/>
    <property type="project" value="CGD"/>
</dbReference>
<dbReference type="GO" id="GO:0000981">
    <property type="term" value="F:DNA-binding transcription factor activity, RNA polymerase II-specific"/>
    <property type="evidence" value="ECO:0000318"/>
    <property type="project" value="GO_Central"/>
</dbReference>
<dbReference type="GO" id="GO:0001217">
    <property type="term" value="F:DNA-binding transcription repressor activity"/>
    <property type="evidence" value="ECO:0000315"/>
    <property type="project" value="CGD"/>
</dbReference>
<dbReference type="GO" id="GO:0003690">
    <property type="term" value="F:double-stranded DNA binding"/>
    <property type="evidence" value="ECO:0000314"/>
    <property type="project" value="CGD"/>
</dbReference>
<dbReference type="GO" id="GO:0000978">
    <property type="term" value="F:RNA polymerase II cis-regulatory region sequence-specific DNA binding"/>
    <property type="evidence" value="ECO:0000318"/>
    <property type="project" value="GO_Central"/>
</dbReference>
<dbReference type="GO" id="GO:0008270">
    <property type="term" value="F:zinc ion binding"/>
    <property type="evidence" value="ECO:0007669"/>
    <property type="project" value="UniProtKB-KW"/>
</dbReference>
<dbReference type="GO" id="GO:0097316">
    <property type="term" value="P:cellular response to N-acetyl-D-glucosamine"/>
    <property type="evidence" value="ECO:0000315"/>
    <property type="project" value="CGD"/>
</dbReference>
<dbReference type="GO" id="GO:0036244">
    <property type="term" value="P:cellular response to neutral pH"/>
    <property type="evidence" value="ECO:0000315"/>
    <property type="project" value="CGD"/>
</dbReference>
<dbReference type="GO" id="GO:0009267">
    <property type="term" value="P:cellular response to starvation"/>
    <property type="evidence" value="ECO:0000315"/>
    <property type="project" value="CGD"/>
</dbReference>
<dbReference type="GO" id="GO:0001410">
    <property type="term" value="P:chlamydospore formation"/>
    <property type="evidence" value="ECO:0000315"/>
    <property type="project" value="CGD"/>
</dbReference>
<dbReference type="GO" id="GO:0044114">
    <property type="term" value="P:development of symbiont in host"/>
    <property type="evidence" value="ECO:0000315"/>
    <property type="project" value="CGD"/>
</dbReference>
<dbReference type="GO" id="GO:0030447">
    <property type="term" value="P:filamentous growth"/>
    <property type="evidence" value="ECO:0000315"/>
    <property type="project" value="CGD"/>
</dbReference>
<dbReference type="GO" id="GO:0045892">
    <property type="term" value="P:negative regulation of DNA-templated transcription"/>
    <property type="evidence" value="ECO:0000314"/>
    <property type="project" value="CGD"/>
</dbReference>
<dbReference type="GO" id="GO:0060258">
    <property type="term" value="P:negative regulation of filamentous growth"/>
    <property type="evidence" value="ECO:0000315"/>
    <property type="project" value="CGD"/>
</dbReference>
<dbReference type="GO" id="GO:0045827">
    <property type="term" value="P:negative regulation of isoprenoid metabolic process"/>
    <property type="evidence" value="ECO:0000315"/>
    <property type="project" value="CGD"/>
</dbReference>
<dbReference type="GO" id="GO:0000122">
    <property type="term" value="P:negative regulation of transcription by RNA polymerase II"/>
    <property type="evidence" value="ECO:0000315"/>
    <property type="project" value="CGD"/>
</dbReference>
<dbReference type="GO" id="GO:0009372">
    <property type="term" value="P:quorum sensing"/>
    <property type="evidence" value="ECO:0000315"/>
    <property type="project" value="CGD"/>
</dbReference>
<dbReference type="GO" id="GO:0006357">
    <property type="term" value="P:regulation of transcription by RNA polymerase II"/>
    <property type="evidence" value="ECO:0000318"/>
    <property type="project" value="GO_Central"/>
</dbReference>
<dbReference type="FunFam" id="3.30.160.60:FF:002160">
    <property type="entry name" value="Transcriptional regulator NRG1"/>
    <property type="match status" value="1"/>
</dbReference>
<dbReference type="FunFam" id="3.30.160.60:FF:001382">
    <property type="entry name" value="Transcriptional repressor"/>
    <property type="match status" value="1"/>
</dbReference>
<dbReference type="Gene3D" id="3.30.160.60">
    <property type="entry name" value="Classic Zinc Finger"/>
    <property type="match status" value="2"/>
</dbReference>
<dbReference type="InterPro" id="IPR036236">
    <property type="entry name" value="Znf_C2H2_sf"/>
</dbReference>
<dbReference type="InterPro" id="IPR013087">
    <property type="entry name" value="Znf_C2H2_type"/>
</dbReference>
<dbReference type="PANTHER" id="PTHR23235">
    <property type="entry name" value="KRUEPPEL-LIKE TRANSCRIPTION FACTOR"/>
    <property type="match status" value="1"/>
</dbReference>
<dbReference type="PANTHER" id="PTHR23235:SF120">
    <property type="entry name" value="KRUPPEL-LIKE FACTOR 15"/>
    <property type="match status" value="1"/>
</dbReference>
<dbReference type="Pfam" id="PF00096">
    <property type="entry name" value="zf-C2H2"/>
    <property type="match status" value="1"/>
</dbReference>
<dbReference type="SMART" id="SM00355">
    <property type="entry name" value="ZnF_C2H2"/>
    <property type="match status" value="2"/>
</dbReference>
<dbReference type="SUPFAM" id="SSF57667">
    <property type="entry name" value="beta-beta-alpha zinc fingers"/>
    <property type="match status" value="1"/>
</dbReference>
<dbReference type="PROSITE" id="PS00028">
    <property type="entry name" value="ZINC_FINGER_C2H2_1"/>
    <property type="match status" value="2"/>
</dbReference>
<dbReference type="PROSITE" id="PS50157">
    <property type="entry name" value="ZINC_FINGER_C2H2_2"/>
    <property type="match status" value="2"/>
</dbReference>